<comment type="function">
    <text evidence="1">RNaseP catalyzes the removal of the 5'-leader sequence from pre-tRNA to produce the mature 5'-terminus. It can also cleave other RNA substrates such as 4.5S RNA. The protein component plays an auxiliary but essential role in vivo by binding to the 5'-leader sequence and broadening the substrate specificity of the ribozyme.</text>
</comment>
<comment type="catalytic activity">
    <reaction evidence="1">
        <text>Endonucleolytic cleavage of RNA, removing 5'-extranucleotides from tRNA precursor.</text>
        <dbReference type="EC" id="3.1.26.5"/>
    </reaction>
</comment>
<comment type="subunit">
    <text evidence="1">Consists of a catalytic RNA component (M1 or rnpB) and a protein subunit.</text>
</comment>
<comment type="similarity">
    <text evidence="1">Belongs to the RnpA family.</text>
</comment>
<proteinExistence type="inferred from homology"/>
<accession>A2C405</accession>
<dbReference type="EC" id="3.1.26.5" evidence="1"/>
<dbReference type="EMBL" id="CP000553">
    <property type="protein sequence ID" value="ABM76215.1"/>
    <property type="molecule type" value="Genomic_DNA"/>
</dbReference>
<dbReference type="RefSeq" id="WP_011824220.1">
    <property type="nucleotide sequence ID" value="NC_008819.1"/>
</dbReference>
<dbReference type="SMR" id="A2C405"/>
<dbReference type="KEGG" id="pme:NATL1_16581"/>
<dbReference type="eggNOG" id="COG0594">
    <property type="taxonomic scope" value="Bacteria"/>
</dbReference>
<dbReference type="HOGENOM" id="CLU_117179_2_0_3"/>
<dbReference type="Proteomes" id="UP000002592">
    <property type="component" value="Chromosome"/>
</dbReference>
<dbReference type="GO" id="GO:0030677">
    <property type="term" value="C:ribonuclease P complex"/>
    <property type="evidence" value="ECO:0007669"/>
    <property type="project" value="TreeGrafter"/>
</dbReference>
<dbReference type="GO" id="GO:0042781">
    <property type="term" value="F:3'-tRNA processing endoribonuclease activity"/>
    <property type="evidence" value="ECO:0007669"/>
    <property type="project" value="TreeGrafter"/>
</dbReference>
<dbReference type="GO" id="GO:0004526">
    <property type="term" value="F:ribonuclease P activity"/>
    <property type="evidence" value="ECO:0007669"/>
    <property type="project" value="UniProtKB-UniRule"/>
</dbReference>
<dbReference type="GO" id="GO:0000049">
    <property type="term" value="F:tRNA binding"/>
    <property type="evidence" value="ECO:0007669"/>
    <property type="project" value="UniProtKB-UniRule"/>
</dbReference>
<dbReference type="GO" id="GO:0001682">
    <property type="term" value="P:tRNA 5'-leader removal"/>
    <property type="evidence" value="ECO:0007669"/>
    <property type="project" value="UniProtKB-UniRule"/>
</dbReference>
<dbReference type="Gene3D" id="3.30.230.10">
    <property type="match status" value="1"/>
</dbReference>
<dbReference type="HAMAP" id="MF_00227">
    <property type="entry name" value="RNase_P"/>
    <property type="match status" value="1"/>
</dbReference>
<dbReference type="InterPro" id="IPR020568">
    <property type="entry name" value="Ribosomal_Su5_D2-typ_SF"/>
</dbReference>
<dbReference type="InterPro" id="IPR014721">
    <property type="entry name" value="Ribsml_uS5_D2-typ_fold_subgr"/>
</dbReference>
<dbReference type="InterPro" id="IPR000100">
    <property type="entry name" value="RNase_P"/>
</dbReference>
<dbReference type="NCBIfam" id="TIGR00188">
    <property type="entry name" value="rnpA"/>
    <property type="match status" value="1"/>
</dbReference>
<dbReference type="PANTHER" id="PTHR33992">
    <property type="entry name" value="RIBONUCLEASE P PROTEIN COMPONENT"/>
    <property type="match status" value="1"/>
</dbReference>
<dbReference type="PANTHER" id="PTHR33992:SF1">
    <property type="entry name" value="RIBONUCLEASE P PROTEIN COMPONENT"/>
    <property type="match status" value="1"/>
</dbReference>
<dbReference type="Pfam" id="PF00825">
    <property type="entry name" value="Ribonuclease_P"/>
    <property type="match status" value="1"/>
</dbReference>
<dbReference type="SUPFAM" id="SSF54211">
    <property type="entry name" value="Ribosomal protein S5 domain 2-like"/>
    <property type="match status" value="1"/>
</dbReference>
<gene>
    <name evidence="1" type="primary">rnpA</name>
    <name type="ordered locus">NATL1_16581</name>
</gene>
<sequence>MVLPKHMRLKGHRCFDFIYKEGSRFYSSSMVLRVTDANKKPQVKGKQSKTRPSIKCAISISNKVSKKSVTRNKLRRLFHHHLSLRLSNMSCDKEIWAFISLKPSSMKNSYSTLLKECDKLLTKAGITK</sequence>
<protein>
    <recommendedName>
        <fullName evidence="1">Ribonuclease P protein component</fullName>
        <shortName evidence="1">RNase P protein</shortName>
        <shortName evidence="1">RNaseP protein</shortName>
        <ecNumber evidence="1">3.1.26.5</ecNumber>
    </recommendedName>
    <alternativeName>
        <fullName evidence="1">Protein C5</fullName>
    </alternativeName>
</protein>
<evidence type="ECO:0000255" key="1">
    <source>
        <dbReference type="HAMAP-Rule" id="MF_00227"/>
    </source>
</evidence>
<feature type="chain" id="PRO_1000194663" description="Ribonuclease P protein component">
    <location>
        <begin position="1"/>
        <end position="128"/>
    </location>
</feature>
<keyword id="KW-0255">Endonuclease</keyword>
<keyword id="KW-0378">Hydrolase</keyword>
<keyword id="KW-0540">Nuclease</keyword>
<keyword id="KW-0694">RNA-binding</keyword>
<keyword id="KW-0819">tRNA processing</keyword>
<organism>
    <name type="scientific">Prochlorococcus marinus (strain NATL1A)</name>
    <dbReference type="NCBI Taxonomy" id="167555"/>
    <lineage>
        <taxon>Bacteria</taxon>
        <taxon>Bacillati</taxon>
        <taxon>Cyanobacteriota</taxon>
        <taxon>Cyanophyceae</taxon>
        <taxon>Synechococcales</taxon>
        <taxon>Prochlorococcaceae</taxon>
        <taxon>Prochlorococcus</taxon>
    </lineage>
</organism>
<reference key="1">
    <citation type="journal article" date="2007" name="PLoS Genet.">
        <title>Patterns and implications of gene gain and loss in the evolution of Prochlorococcus.</title>
        <authorList>
            <person name="Kettler G.C."/>
            <person name="Martiny A.C."/>
            <person name="Huang K."/>
            <person name="Zucker J."/>
            <person name="Coleman M.L."/>
            <person name="Rodrigue S."/>
            <person name="Chen F."/>
            <person name="Lapidus A."/>
            <person name="Ferriera S."/>
            <person name="Johnson J."/>
            <person name="Steglich C."/>
            <person name="Church G.M."/>
            <person name="Richardson P."/>
            <person name="Chisholm S.W."/>
        </authorList>
    </citation>
    <scope>NUCLEOTIDE SEQUENCE [LARGE SCALE GENOMIC DNA]</scope>
    <source>
        <strain>NATL1A</strain>
    </source>
</reference>
<name>RNPA_PROM1</name>